<organism>
    <name type="scientific">Homo sapiens</name>
    <name type="common">Human</name>
    <dbReference type="NCBI Taxonomy" id="9606"/>
    <lineage>
        <taxon>Eukaryota</taxon>
        <taxon>Metazoa</taxon>
        <taxon>Chordata</taxon>
        <taxon>Craniata</taxon>
        <taxon>Vertebrata</taxon>
        <taxon>Euteleostomi</taxon>
        <taxon>Mammalia</taxon>
        <taxon>Eutheria</taxon>
        <taxon>Euarchontoglires</taxon>
        <taxon>Primates</taxon>
        <taxon>Haplorrhini</taxon>
        <taxon>Catarrhini</taxon>
        <taxon>Hominidae</taxon>
        <taxon>Homo</taxon>
    </lineage>
</organism>
<accession>Q15404</accession>
<accession>A8KA46</accession>
<accession>D3DRU3</accession>
<accession>Q6FI17</accession>
<feature type="initiator methionine" description="Removed" evidence="3">
    <location>
        <position position="1"/>
    </location>
</feature>
<feature type="chain" id="PRO_0000097499" description="Ras suppressor protein 1">
    <location>
        <begin position="2"/>
        <end position="277"/>
    </location>
</feature>
<feature type="repeat" description="LRR 1">
    <location>
        <begin position="41"/>
        <end position="63"/>
    </location>
</feature>
<feature type="repeat" description="LRR 2">
    <location>
        <begin position="64"/>
        <end position="85"/>
    </location>
</feature>
<feature type="repeat" description="LRR 3">
    <location>
        <begin position="87"/>
        <end position="109"/>
    </location>
</feature>
<feature type="repeat" description="LRR 4">
    <location>
        <begin position="110"/>
        <end position="133"/>
    </location>
</feature>
<feature type="repeat" description="LRR 5">
    <location>
        <begin position="135"/>
        <end position="156"/>
    </location>
</feature>
<feature type="repeat" description="LRR 6">
    <location>
        <begin position="158"/>
        <end position="179"/>
    </location>
</feature>
<feature type="repeat" description="LRR 7">
    <location>
        <begin position="181"/>
        <end position="202"/>
    </location>
</feature>
<feature type="region of interest" description="Disordered" evidence="1">
    <location>
        <begin position="1"/>
        <end position="24"/>
    </location>
</feature>
<feature type="region of interest" description="Disordered" evidence="1">
    <location>
        <begin position="250"/>
        <end position="277"/>
    </location>
</feature>
<feature type="compositionally biased region" description="Basic and acidic residues" evidence="1">
    <location>
        <begin position="7"/>
        <end position="24"/>
    </location>
</feature>
<feature type="compositionally biased region" description="Basic and acidic residues" evidence="1">
    <location>
        <begin position="256"/>
        <end position="265"/>
    </location>
</feature>
<feature type="modified residue" description="N-acetylserine" evidence="3">
    <location>
        <position position="2"/>
    </location>
</feature>
<feature type="splice variant" id="VSP_043831" description="In isoform 2." evidence="2">
    <location>
        <begin position="1"/>
        <end position="53"/>
    </location>
</feature>
<feature type="helix" evidence="4">
    <location>
        <begin position="5"/>
        <end position="14"/>
    </location>
</feature>
<feature type="strand" evidence="4">
    <location>
        <begin position="18"/>
        <end position="21"/>
    </location>
</feature>
<feature type="helix" evidence="4">
    <location>
        <begin position="30"/>
        <end position="32"/>
    </location>
</feature>
<feature type="helix" evidence="4">
    <location>
        <begin position="36"/>
        <end position="38"/>
    </location>
</feature>
<feature type="strand" evidence="4">
    <location>
        <begin position="43"/>
        <end position="46"/>
    </location>
</feature>
<feature type="helix" evidence="4">
    <location>
        <begin position="57"/>
        <end position="61"/>
    </location>
</feature>
<feature type="strand" evidence="4">
    <location>
        <begin position="66"/>
        <end position="69"/>
    </location>
</feature>
<feature type="helix" evidence="4">
    <location>
        <begin position="80"/>
        <end position="84"/>
    </location>
</feature>
<feature type="strand" evidence="4">
    <location>
        <begin position="90"/>
        <end position="92"/>
    </location>
</feature>
<feature type="helix" evidence="4">
    <location>
        <begin position="105"/>
        <end position="107"/>
    </location>
</feature>
<feature type="strand" evidence="4">
    <location>
        <begin position="113"/>
        <end position="115"/>
    </location>
</feature>
<feature type="strand" evidence="6">
    <location>
        <begin position="118"/>
        <end position="120"/>
    </location>
</feature>
<feature type="helix" evidence="4">
    <location>
        <begin position="123"/>
        <end position="125"/>
    </location>
</feature>
<feature type="helix" evidence="4">
    <location>
        <begin position="130"/>
        <end position="132"/>
    </location>
</feature>
<feature type="strand" evidence="4">
    <location>
        <begin position="137"/>
        <end position="140"/>
    </location>
</feature>
<feature type="helix" evidence="4">
    <location>
        <begin position="151"/>
        <end position="155"/>
    </location>
</feature>
<feature type="strand" evidence="4">
    <location>
        <begin position="161"/>
        <end position="163"/>
    </location>
</feature>
<feature type="helix" evidence="4">
    <location>
        <begin position="174"/>
        <end position="178"/>
    </location>
</feature>
<feature type="strand" evidence="4">
    <location>
        <begin position="184"/>
        <end position="186"/>
    </location>
</feature>
<feature type="helix" evidence="4">
    <location>
        <begin position="197"/>
        <end position="199"/>
    </location>
</feature>
<feature type="strand" evidence="5">
    <location>
        <begin position="206"/>
        <end position="212"/>
    </location>
</feature>
<feature type="helix" evidence="5">
    <location>
        <begin position="220"/>
        <end position="228"/>
    </location>
</feature>
<feature type="helix" evidence="5">
    <location>
        <begin position="230"/>
        <end position="238"/>
    </location>
</feature>
<feature type="helix" evidence="5">
    <location>
        <begin position="240"/>
        <end position="250"/>
    </location>
</feature>
<comment type="function">
    <text>Potentially plays a role in the Ras signal transduction pathway. Capable of suppressing v-Ras transformation in vitro.</text>
</comment>
<comment type="interaction">
    <interactant intactId="EBI-1057132">
        <id>Q15404</id>
    </interactant>
    <interactant intactId="EBI-306928">
        <id>P48059</id>
        <label>LIMS1</label>
    </interactant>
    <organismsDiffer>false</organismsDiffer>
    <experiments>8</experiments>
</comment>
<comment type="alternative products">
    <event type="alternative splicing"/>
    <isoform>
        <id>Q15404-1</id>
        <name>1</name>
        <sequence type="displayed"/>
    </isoform>
    <isoform>
        <id>Q15404-2</id>
        <name>2</name>
        <sequence type="described" ref="VSP_043831"/>
    </isoform>
</comment>
<name>RSU1_HUMAN</name>
<evidence type="ECO:0000256" key="1">
    <source>
        <dbReference type="SAM" id="MobiDB-lite"/>
    </source>
</evidence>
<evidence type="ECO:0000303" key="2">
    <source>
    </source>
</evidence>
<evidence type="ECO:0007744" key="3">
    <source>
    </source>
</evidence>
<evidence type="ECO:0007829" key="4">
    <source>
        <dbReference type="PDB" id="7D2S"/>
    </source>
</evidence>
<evidence type="ECO:0007829" key="5">
    <source>
        <dbReference type="PDB" id="7LT8"/>
    </source>
</evidence>
<evidence type="ECO:0007829" key="6">
    <source>
        <dbReference type="PDB" id="7LT9"/>
    </source>
</evidence>
<sequence>MSKSLKKLVEESREKNQPEVDMSDRGISNMLDVNGLFTLSHITQLVLSHNKLTMVPPNIAELKNLEVLNFFNNQIEELPTQISSLQKLKHLNLGMNRLNTLPRGFGSLPALEVLDLTYNNLSENSLPGNFFYLTTLRALYLSDNDFEILPPDIGKLTKLQILSLRDNDLISLPKEIGELTQLKELHIQGNRLTVLPPELGNLDLTGQKQVFKAENNPWVTPIADQFQLGVSHVFEYIRSETYKYLYGRHMQANPEPPKKNNDKSKKISRKPLAAKNR</sequence>
<reference key="1">
    <citation type="journal article" date="1993" name="Genomics">
        <title>Human RSU1 is highly homologous to mouse Rsu-1 and localizes to human chromosome 10.</title>
        <authorList>
            <person name="Tsuda T."/>
            <person name="Cutler M.L."/>
        </authorList>
    </citation>
    <scope>NUCLEOTIDE SEQUENCE [MRNA] (ISOFORM 1)</scope>
    <source>
        <tissue>Skin</tissue>
    </source>
</reference>
<reference key="2">
    <citation type="journal article" date="2004" name="Nat. Genet.">
        <title>Complete sequencing and characterization of 21,243 full-length human cDNAs.</title>
        <authorList>
            <person name="Ota T."/>
            <person name="Suzuki Y."/>
            <person name="Nishikawa T."/>
            <person name="Otsuki T."/>
            <person name="Sugiyama T."/>
            <person name="Irie R."/>
            <person name="Wakamatsu A."/>
            <person name="Hayashi K."/>
            <person name="Sato H."/>
            <person name="Nagai K."/>
            <person name="Kimura K."/>
            <person name="Makita H."/>
            <person name="Sekine M."/>
            <person name="Obayashi M."/>
            <person name="Nishi T."/>
            <person name="Shibahara T."/>
            <person name="Tanaka T."/>
            <person name="Ishii S."/>
            <person name="Yamamoto J."/>
            <person name="Saito K."/>
            <person name="Kawai Y."/>
            <person name="Isono Y."/>
            <person name="Nakamura Y."/>
            <person name="Nagahari K."/>
            <person name="Murakami K."/>
            <person name="Yasuda T."/>
            <person name="Iwayanagi T."/>
            <person name="Wagatsuma M."/>
            <person name="Shiratori A."/>
            <person name="Sudo H."/>
            <person name="Hosoiri T."/>
            <person name="Kaku Y."/>
            <person name="Kodaira H."/>
            <person name="Kondo H."/>
            <person name="Sugawara M."/>
            <person name="Takahashi M."/>
            <person name="Kanda K."/>
            <person name="Yokoi T."/>
            <person name="Furuya T."/>
            <person name="Kikkawa E."/>
            <person name="Omura Y."/>
            <person name="Abe K."/>
            <person name="Kamihara K."/>
            <person name="Katsuta N."/>
            <person name="Sato K."/>
            <person name="Tanikawa M."/>
            <person name="Yamazaki M."/>
            <person name="Ninomiya K."/>
            <person name="Ishibashi T."/>
            <person name="Yamashita H."/>
            <person name="Murakawa K."/>
            <person name="Fujimori K."/>
            <person name="Tanai H."/>
            <person name="Kimata M."/>
            <person name="Watanabe M."/>
            <person name="Hiraoka S."/>
            <person name="Chiba Y."/>
            <person name="Ishida S."/>
            <person name="Ono Y."/>
            <person name="Takiguchi S."/>
            <person name="Watanabe S."/>
            <person name="Yosida M."/>
            <person name="Hotuta T."/>
            <person name="Kusano J."/>
            <person name="Kanehori K."/>
            <person name="Takahashi-Fujii A."/>
            <person name="Hara H."/>
            <person name="Tanase T.-O."/>
            <person name="Nomura Y."/>
            <person name="Togiya S."/>
            <person name="Komai F."/>
            <person name="Hara R."/>
            <person name="Takeuchi K."/>
            <person name="Arita M."/>
            <person name="Imose N."/>
            <person name="Musashino K."/>
            <person name="Yuuki H."/>
            <person name="Oshima A."/>
            <person name="Sasaki N."/>
            <person name="Aotsuka S."/>
            <person name="Yoshikawa Y."/>
            <person name="Matsunawa H."/>
            <person name="Ichihara T."/>
            <person name="Shiohata N."/>
            <person name="Sano S."/>
            <person name="Moriya S."/>
            <person name="Momiyama H."/>
            <person name="Satoh N."/>
            <person name="Takami S."/>
            <person name="Terashima Y."/>
            <person name="Suzuki O."/>
            <person name="Nakagawa S."/>
            <person name="Senoh A."/>
            <person name="Mizoguchi H."/>
            <person name="Goto Y."/>
            <person name="Shimizu F."/>
            <person name="Wakebe H."/>
            <person name="Hishigaki H."/>
            <person name="Watanabe T."/>
            <person name="Sugiyama A."/>
            <person name="Takemoto M."/>
            <person name="Kawakami B."/>
            <person name="Yamazaki M."/>
            <person name="Watanabe K."/>
            <person name="Kumagai A."/>
            <person name="Itakura S."/>
            <person name="Fukuzumi Y."/>
            <person name="Fujimori Y."/>
            <person name="Komiyama M."/>
            <person name="Tashiro H."/>
            <person name="Tanigami A."/>
            <person name="Fujiwara T."/>
            <person name="Ono T."/>
            <person name="Yamada K."/>
            <person name="Fujii Y."/>
            <person name="Ozaki K."/>
            <person name="Hirao M."/>
            <person name="Ohmori Y."/>
            <person name="Kawabata A."/>
            <person name="Hikiji T."/>
            <person name="Kobatake N."/>
            <person name="Inagaki H."/>
            <person name="Ikema Y."/>
            <person name="Okamoto S."/>
            <person name="Okitani R."/>
            <person name="Kawakami T."/>
            <person name="Noguchi S."/>
            <person name="Itoh T."/>
            <person name="Shigeta K."/>
            <person name="Senba T."/>
            <person name="Matsumura K."/>
            <person name="Nakajima Y."/>
            <person name="Mizuno T."/>
            <person name="Morinaga M."/>
            <person name="Sasaki M."/>
            <person name="Togashi T."/>
            <person name="Oyama M."/>
            <person name="Hata H."/>
            <person name="Watanabe M."/>
            <person name="Komatsu T."/>
            <person name="Mizushima-Sugano J."/>
            <person name="Satoh T."/>
            <person name="Shirai Y."/>
            <person name="Takahashi Y."/>
            <person name="Nakagawa K."/>
            <person name="Okumura K."/>
            <person name="Nagase T."/>
            <person name="Nomura N."/>
            <person name="Kikuchi H."/>
            <person name="Masuho Y."/>
            <person name="Yamashita R."/>
            <person name="Nakai K."/>
            <person name="Yada T."/>
            <person name="Nakamura Y."/>
            <person name="Ohara O."/>
            <person name="Isogai T."/>
            <person name="Sugano S."/>
        </authorList>
    </citation>
    <scope>NUCLEOTIDE SEQUENCE [LARGE SCALE MRNA] (ISOFORMS 1 AND 2)</scope>
    <source>
        <tissue>Thalamus</tissue>
        <tissue>Trachea</tissue>
    </source>
</reference>
<reference key="3">
    <citation type="submission" date="2004-06" db="EMBL/GenBank/DDBJ databases">
        <title>Cloning of human full open reading frames in Gateway(TM) system entry vector (pDONR201).</title>
        <authorList>
            <person name="Ebert L."/>
            <person name="Schick M."/>
            <person name="Neubert P."/>
            <person name="Schatten R."/>
            <person name="Henze S."/>
            <person name="Korn B."/>
        </authorList>
    </citation>
    <scope>NUCLEOTIDE SEQUENCE [LARGE SCALE MRNA] (ISOFORM 1)</scope>
</reference>
<reference key="4">
    <citation type="submission" date="2007-02" db="EMBL/GenBank/DDBJ databases">
        <authorList>
            <consortium name="NHLBI resequencing and genotyping service (RS&amp;G)"/>
        </authorList>
    </citation>
    <scope>NUCLEOTIDE SEQUENCE [GENOMIC DNA]</scope>
</reference>
<reference key="5">
    <citation type="journal article" date="2004" name="Nature">
        <title>The DNA sequence and comparative analysis of human chromosome 10.</title>
        <authorList>
            <person name="Deloukas P."/>
            <person name="Earthrowl M.E."/>
            <person name="Grafham D.V."/>
            <person name="Rubenfield M."/>
            <person name="French L."/>
            <person name="Steward C.A."/>
            <person name="Sims S.K."/>
            <person name="Jones M.C."/>
            <person name="Searle S."/>
            <person name="Scott C."/>
            <person name="Howe K."/>
            <person name="Hunt S.E."/>
            <person name="Andrews T.D."/>
            <person name="Gilbert J.G.R."/>
            <person name="Swarbreck D."/>
            <person name="Ashurst J.L."/>
            <person name="Taylor A."/>
            <person name="Battles J."/>
            <person name="Bird C.P."/>
            <person name="Ainscough R."/>
            <person name="Almeida J.P."/>
            <person name="Ashwell R.I.S."/>
            <person name="Ambrose K.D."/>
            <person name="Babbage A.K."/>
            <person name="Bagguley C.L."/>
            <person name="Bailey J."/>
            <person name="Banerjee R."/>
            <person name="Bates K."/>
            <person name="Beasley H."/>
            <person name="Bray-Allen S."/>
            <person name="Brown A.J."/>
            <person name="Brown J.Y."/>
            <person name="Burford D.C."/>
            <person name="Burrill W."/>
            <person name="Burton J."/>
            <person name="Cahill P."/>
            <person name="Camire D."/>
            <person name="Carter N.P."/>
            <person name="Chapman J.C."/>
            <person name="Clark S.Y."/>
            <person name="Clarke G."/>
            <person name="Clee C.M."/>
            <person name="Clegg S."/>
            <person name="Corby N."/>
            <person name="Coulson A."/>
            <person name="Dhami P."/>
            <person name="Dutta I."/>
            <person name="Dunn M."/>
            <person name="Faulkner L."/>
            <person name="Frankish A."/>
            <person name="Frankland J.A."/>
            <person name="Garner P."/>
            <person name="Garnett J."/>
            <person name="Gribble S."/>
            <person name="Griffiths C."/>
            <person name="Grocock R."/>
            <person name="Gustafson E."/>
            <person name="Hammond S."/>
            <person name="Harley J.L."/>
            <person name="Hart E."/>
            <person name="Heath P.D."/>
            <person name="Ho T.P."/>
            <person name="Hopkins B."/>
            <person name="Horne J."/>
            <person name="Howden P.J."/>
            <person name="Huckle E."/>
            <person name="Hynds C."/>
            <person name="Johnson C."/>
            <person name="Johnson D."/>
            <person name="Kana A."/>
            <person name="Kay M."/>
            <person name="Kimberley A.M."/>
            <person name="Kershaw J.K."/>
            <person name="Kokkinaki M."/>
            <person name="Laird G.K."/>
            <person name="Lawlor S."/>
            <person name="Lee H.M."/>
            <person name="Leongamornlert D.A."/>
            <person name="Laird G."/>
            <person name="Lloyd C."/>
            <person name="Lloyd D.M."/>
            <person name="Loveland J."/>
            <person name="Lovell J."/>
            <person name="McLaren S."/>
            <person name="McLay K.E."/>
            <person name="McMurray A."/>
            <person name="Mashreghi-Mohammadi M."/>
            <person name="Matthews L."/>
            <person name="Milne S."/>
            <person name="Nickerson T."/>
            <person name="Nguyen M."/>
            <person name="Overton-Larty E."/>
            <person name="Palmer S.A."/>
            <person name="Pearce A.V."/>
            <person name="Peck A.I."/>
            <person name="Pelan S."/>
            <person name="Phillimore B."/>
            <person name="Porter K."/>
            <person name="Rice C.M."/>
            <person name="Rogosin A."/>
            <person name="Ross M.T."/>
            <person name="Sarafidou T."/>
            <person name="Sehra H.K."/>
            <person name="Shownkeen R."/>
            <person name="Skuce C.D."/>
            <person name="Smith M."/>
            <person name="Standring L."/>
            <person name="Sycamore N."/>
            <person name="Tester J."/>
            <person name="Thorpe A."/>
            <person name="Torcasso W."/>
            <person name="Tracey A."/>
            <person name="Tromans A."/>
            <person name="Tsolas J."/>
            <person name="Wall M."/>
            <person name="Walsh J."/>
            <person name="Wang H."/>
            <person name="Weinstock K."/>
            <person name="West A.P."/>
            <person name="Willey D.L."/>
            <person name="Whitehead S.L."/>
            <person name="Wilming L."/>
            <person name="Wray P.W."/>
            <person name="Young L."/>
            <person name="Chen Y."/>
            <person name="Lovering R.C."/>
            <person name="Moschonas N.K."/>
            <person name="Siebert R."/>
            <person name="Fechtel K."/>
            <person name="Bentley D."/>
            <person name="Durbin R.M."/>
            <person name="Hubbard T."/>
            <person name="Doucette-Stamm L."/>
            <person name="Beck S."/>
            <person name="Smith D.R."/>
            <person name="Rogers J."/>
        </authorList>
    </citation>
    <scope>NUCLEOTIDE SEQUENCE [LARGE SCALE GENOMIC DNA]</scope>
</reference>
<reference key="6">
    <citation type="submission" date="2005-09" db="EMBL/GenBank/DDBJ databases">
        <authorList>
            <person name="Mural R.J."/>
            <person name="Istrail S."/>
            <person name="Sutton G.G."/>
            <person name="Florea L."/>
            <person name="Halpern A.L."/>
            <person name="Mobarry C.M."/>
            <person name="Lippert R."/>
            <person name="Walenz B."/>
            <person name="Shatkay H."/>
            <person name="Dew I."/>
            <person name="Miller J.R."/>
            <person name="Flanigan M.J."/>
            <person name="Edwards N.J."/>
            <person name="Bolanos R."/>
            <person name="Fasulo D."/>
            <person name="Halldorsson B.V."/>
            <person name="Hannenhalli S."/>
            <person name="Turner R."/>
            <person name="Yooseph S."/>
            <person name="Lu F."/>
            <person name="Nusskern D.R."/>
            <person name="Shue B.C."/>
            <person name="Zheng X.H."/>
            <person name="Zhong F."/>
            <person name="Delcher A.L."/>
            <person name="Huson D.H."/>
            <person name="Kravitz S.A."/>
            <person name="Mouchard L."/>
            <person name="Reinert K."/>
            <person name="Remington K.A."/>
            <person name="Clark A.G."/>
            <person name="Waterman M.S."/>
            <person name="Eichler E.E."/>
            <person name="Adams M.D."/>
            <person name="Hunkapiller M.W."/>
            <person name="Myers E.W."/>
            <person name="Venter J.C."/>
        </authorList>
    </citation>
    <scope>NUCLEOTIDE SEQUENCE [LARGE SCALE GENOMIC DNA]</scope>
</reference>
<reference key="7">
    <citation type="journal article" date="2004" name="Genome Res.">
        <title>The status, quality, and expansion of the NIH full-length cDNA project: the Mammalian Gene Collection (MGC).</title>
        <authorList>
            <consortium name="The MGC Project Team"/>
        </authorList>
    </citation>
    <scope>NUCLEOTIDE SEQUENCE [LARGE SCALE MRNA] (ISOFORM 1)</scope>
    <source>
        <tissue>Brain</tissue>
        <tissue>Eye</tissue>
    </source>
</reference>
<reference key="8">
    <citation type="journal article" date="2003" name="Nat. Biotechnol.">
        <title>Exploring proteomes and analyzing protein processing by mass spectrometric identification of sorted N-terminal peptides.</title>
        <authorList>
            <person name="Gevaert K."/>
            <person name="Goethals M."/>
            <person name="Martens L."/>
            <person name="Van Damme J."/>
            <person name="Staes A."/>
            <person name="Thomas G.R."/>
            <person name="Vandekerckhove J."/>
        </authorList>
    </citation>
    <scope>PROTEIN SEQUENCE OF 2-13 (ISOFORM 1)</scope>
    <source>
        <tissue>Platelet</tissue>
    </source>
</reference>
<reference key="9">
    <citation type="journal article" date="2004" name="Biochem. J.">
        <title>Vectorial proteomics reveal targeting, phosphorylation and specific fragmentation of polymerase I and transcript release factor (PTRF) at the surface of caveolae in human adipocytes.</title>
        <authorList>
            <person name="Aboulaich N."/>
            <person name="Vainonen J.P."/>
            <person name="Stralfors P."/>
            <person name="Vener A.V."/>
        </authorList>
    </citation>
    <scope>PROTEIN SEQUENCE OF 138-155 AND 192-208</scope>
    <source>
        <tissue>Adipocyte</tissue>
    </source>
</reference>
<reference key="10">
    <citation type="journal article" date="2011" name="BMC Syst. Biol.">
        <title>Initial characterization of the human central proteome.</title>
        <authorList>
            <person name="Burkard T.R."/>
            <person name="Planyavsky M."/>
            <person name="Kaupe I."/>
            <person name="Breitwieser F.P."/>
            <person name="Buerckstuemmer T."/>
            <person name="Bennett K.L."/>
            <person name="Superti-Furga G."/>
            <person name="Colinge J."/>
        </authorList>
    </citation>
    <scope>IDENTIFICATION BY MASS SPECTROMETRY [LARGE SCALE ANALYSIS]</scope>
</reference>
<reference key="11">
    <citation type="journal article" date="2012" name="Proc. Natl. Acad. Sci. U.S.A.">
        <title>N-terminal acetylome analyses and functional insights of the N-terminal acetyltransferase NatB.</title>
        <authorList>
            <person name="Van Damme P."/>
            <person name="Lasa M."/>
            <person name="Polevoda B."/>
            <person name="Gazquez C."/>
            <person name="Elosegui-Artola A."/>
            <person name="Kim D.S."/>
            <person name="De Juan-Pardo E."/>
            <person name="Demeyer K."/>
            <person name="Hole K."/>
            <person name="Larrea E."/>
            <person name="Timmerman E."/>
            <person name="Prieto J."/>
            <person name="Arnesen T."/>
            <person name="Sherman F."/>
            <person name="Gevaert K."/>
            <person name="Aldabe R."/>
        </authorList>
    </citation>
    <scope>ACETYLATION [LARGE SCALE ANALYSIS] AT SER-2</scope>
    <scope>CLEAVAGE OF INITIATOR METHIONINE [LARGE SCALE ANALYSIS]</scope>
    <scope>IDENTIFICATION BY MASS SPECTROMETRY [LARGE SCALE ANALYSIS]</scope>
</reference>
<reference key="12">
    <citation type="journal article" date="2015" name="Proteomics">
        <title>N-terminome analysis of the human mitochondrial proteome.</title>
        <authorList>
            <person name="Vaca Jacome A.S."/>
            <person name="Rabilloud T."/>
            <person name="Schaeffer-Reiss C."/>
            <person name="Rompais M."/>
            <person name="Ayoub D."/>
            <person name="Lane L."/>
            <person name="Bairoch A."/>
            <person name="Van Dorsselaer A."/>
            <person name="Carapito C."/>
        </authorList>
    </citation>
    <scope>IDENTIFICATION BY MASS SPECTROMETRY [LARGE SCALE ANALYSIS]</scope>
</reference>
<gene>
    <name type="primary">RSU1</name>
    <name type="synonym">RSP1</name>
</gene>
<keyword id="KW-0002">3D-structure</keyword>
<keyword id="KW-0007">Acetylation</keyword>
<keyword id="KW-0025">Alternative splicing</keyword>
<keyword id="KW-0903">Direct protein sequencing</keyword>
<keyword id="KW-0433">Leucine-rich repeat</keyword>
<keyword id="KW-1267">Proteomics identification</keyword>
<keyword id="KW-1185">Reference proteome</keyword>
<keyword id="KW-0677">Repeat</keyword>
<protein>
    <recommendedName>
        <fullName>Ras suppressor protein 1</fullName>
        <shortName>RSP-1</shortName>
        <shortName>Rsu-1</shortName>
    </recommendedName>
</protein>
<proteinExistence type="evidence at protein level"/>
<dbReference type="EMBL" id="L12535">
    <property type="protein sequence ID" value="AAA60292.1"/>
    <property type="molecule type" value="mRNA"/>
</dbReference>
<dbReference type="EMBL" id="AK292911">
    <property type="protein sequence ID" value="BAF85600.1"/>
    <property type="molecule type" value="mRNA"/>
</dbReference>
<dbReference type="EMBL" id="AK312520">
    <property type="protein sequence ID" value="BAG35419.1"/>
    <property type="molecule type" value="mRNA"/>
</dbReference>
<dbReference type="EMBL" id="CR536521">
    <property type="protein sequence ID" value="CAG38758.1"/>
    <property type="molecule type" value="mRNA"/>
</dbReference>
<dbReference type="EMBL" id="CR541840">
    <property type="protein sequence ID" value="CAG46639.1"/>
    <property type="molecule type" value="mRNA"/>
</dbReference>
<dbReference type="EMBL" id="EF445013">
    <property type="protein sequence ID" value="ACA06048.1"/>
    <property type="molecule type" value="Genomic_DNA"/>
</dbReference>
<dbReference type="EMBL" id="EF445013">
    <property type="protein sequence ID" value="ACA06049.1"/>
    <property type="molecule type" value="Genomic_DNA"/>
</dbReference>
<dbReference type="EMBL" id="EF445013">
    <property type="protein sequence ID" value="ACA06050.1"/>
    <property type="molecule type" value="Genomic_DNA"/>
</dbReference>
<dbReference type="EMBL" id="AC073367">
    <property type="status" value="NOT_ANNOTATED_CDS"/>
    <property type="molecule type" value="Genomic_DNA"/>
</dbReference>
<dbReference type="EMBL" id="AL365215">
    <property type="status" value="NOT_ANNOTATED_CDS"/>
    <property type="molecule type" value="Genomic_DNA"/>
</dbReference>
<dbReference type="EMBL" id="CH471072">
    <property type="protein sequence ID" value="EAW86222.1"/>
    <property type="molecule type" value="Genomic_DNA"/>
</dbReference>
<dbReference type="EMBL" id="CH471072">
    <property type="protein sequence ID" value="EAW86223.1"/>
    <property type="molecule type" value="Genomic_DNA"/>
</dbReference>
<dbReference type="EMBL" id="CH471072">
    <property type="protein sequence ID" value="EAW86224.1"/>
    <property type="molecule type" value="Genomic_DNA"/>
</dbReference>
<dbReference type="EMBL" id="BC005993">
    <property type="protein sequence ID" value="AAH05993.1"/>
    <property type="molecule type" value="mRNA"/>
</dbReference>
<dbReference type="EMBL" id="BC008691">
    <property type="protein sequence ID" value="AAH08691.1"/>
    <property type="molecule type" value="mRNA"/>
</dbReference>
<dbReference type="EMBL" id="BC015644">
    <property type="protein sequence ID" value="AAH15644.1"/>
    <property type="molecule type" value="mRNA"/>
</dbReference>
<dbReference type="CCDS" id="CCDS31157.1">
    <molecule id="Q15404-2"/>
</dbReference>
<dbReference type="CCDS" id="CCDS7112.1">
    <molecule id="Q15404-1"/>
</dbReference>
<dbReference type="PIR" id="I60122">
    <property type="entry name" value="I60122"/>
</dbReference>
<dbReference type="RefSeq" id="NP_036557.1">
    <molecule id="Q15404-1"/>
    <property type="nucleotide sequence ID" value="NM_012425.4"/>
</dbReference>
<dbReference type="RefSeq" id="NP_689937.2">
    <molecule id="Q15404-2"/>
    <property type="nucleotide sequence ID" value="NM_152724.2"/>
</dbReference>
<dbReference type="PDB" id="7D2S">
    <property type="method" value="X-ray"/>
    <property type="resolution" value="1.65 A"/>
    <property type="chains" value="A=1-215"/>
</dbReference>
<dbReference type="PDB" id="7D2T">
    <property type="method" value="X-ray"/>
    <property type="resolution" value="2.20 A"/>
    <property type="chains" value="A/C=1-277"/>
</dbReference>
<dbReference type="PDB" id="7D2U">
    <property type="method" value="X-ray"/>
    <property type="resolution" value="3.15 A"/>
    <property type="chains" value="A=1-277"/>
</dbReference>
<dbReference type="PDB" id="7LT8">
    <property type="method" value="X-ray"/>
    <property type="resolution" value="1.76 A"/>
    <property type="chains" value="A=1-277"/>
</dbReference>
<dbReference type="PDB" id="7LT9">
    <property type="method" value="X-ray"/>
    <property type="resolution" value="3.05 A"/>
    <property type="chains" value="A=1-277"/>
</dbReference>
<dbReference type="PDBsum" id="7D2S"/>
<dbReference type="PDBsum" id="7D2T"/>
<dbReference type="PDBsum" id="7D2U"/>
<dbReference type="PDBsum" id="7LT8"/>
<dbReference type="PDBsum" id="7LT9"/>
<dbReference type="SMR" id="Q15404"/>
<dbReference type="BioGRID" id="112164">
    <property type="interactions" value="68"/>
</dbReference>
<dbReference type="FunCoup" id="Q15404">
    <property type="interactions" value="1133"/>
</dbReference>
<dbReference type="IntAct" id="Q15404">
    <property type="interactions" value="19"/>
</dbReference>
<dbReference type="MINT" id="Q15404"/>
<dbReference type="STRING" id="9606.ENSP00000367154"/>
<dbReference type="GlyGen" id="Q15404">
    <property type="glycosylation" value="1 site, 1 O-linked glycan (1 site)"/>
</dbReference>
<dbReference type="iPTMnet" id="Q15404"/>
<dbReference type="MetOSite" id="Q15404"/>
<dbReference type="PhosphoSitePlus" id="Q15404"/>
<dbReference type="BioMuta" id="RSU1"/>
<dbReference type="DMDM" id="2498866"/>
<dbReference type="OGP" id="Q15404"/>
<dbReference type="jPOST" id="Q15404"/>
<dbReference type="MassIVE" id="Q15404"/>
<dbReference type="PaxDb" id="9606-ENSP00000367154"/>
<dbReference type="PeptideAtlas" id="Q15404"/>
<dbReference type="ProteomicsDB" id="60570">
    <molecule id="Q15404-1"/>
</dbReference>
<dbReference type="ProteomicsDB" id="60571">
    <molecule id="Q15404-2"/>
</dbReference>
<dbReference type="Pumba" id="Q15404"/>
<dbReference type="Antibodypedia" id="25179">
    <property type="antibodies" value="174 antibodies from 27 providers"/>
</dbReference>
<dbReference type="DNASU" id="6251"/>
<dbReference type="Ensembl" id="ENST00000345264.10">
    <molecule id="Q15404-1"/>
    <property type="protein sequence ID" value="ENSP00000339521.5"/>
    <property type="gene ID" value="ENSG00000148484.18"/>
</dbReference>
<dbReference type="Ensembl" id="ENST00000377921.7">
    <molecule id="Q15404-1"/>
    <property type="protein sequence ID" value="ENSP00000367154.3"/>
    <property type="gene ID" value="ENSG00000148484.18"/>
</dbReference>
<dbReference type="Ensembl" id="ENST00000602389.1">
    <molecule id="Q15404-2"/>
    <property type="protein sequence ID" value="ENSP00000473588.1"/>
    <property type="gene ID" value="ENSG00000148484.18"/>
</dbReference>
<dbReference type="GeneID" id="6251"/>
<dbReference type="KEGG" id="hsa:6251"/>
<dbReference type="MANE-Select" id="ENST00000345264.10">
    <property type="protein sequence ID" value="ENSP00000339521.5"/>
    <property type="RefSeq nucleotide sequence ID" value="NM_012425.4"/>
    <property type="RefSeq protein sequence ID" value="NP_036557.1"/>
</dbReference>
<dbReference type="UCSC" id="uc001iok.4">
    <molecule id="Q15404-1"/>
    <property type="organism name" value="human"/>
</dbReference>
<dbReference type="AGR" id="HGNC:10464"/>
<dbReference type="CTD" id="6251"/>
<dbReference type="DisGeNET" id="6251"/>
<dbReference type="GeneCards" id="RSU1"/>
<dbReference type="HGNC" id="HGNC:10464">
    <property type="gene designation" value="RSU1"/>
</dbReference>
<dbReference type="HPA" id="ENSG00000148484">
    <property type="expression patterns" value="Low tissue specificity"/>
</dbReference>
<dbReference type="MIM" id="179555">
    <property type="type" value="gene"/>
</dbReference>
<dbReference type="neXtProt" id="NX_Q15404"/>
<dbReference type="OpenTargets" id="ENSG00000148484"/>
<dbReference type="PharmGKB" id="PA34876"/>
<dbReference type="VEuPathDB" id="HostDB:ENSG00000148484"/>
<dbReference type="eggNOG" id="KOG0617">
    <property type="taxonomic scope" value="Eukaryota"/>
</dbReference>
<dbReference type="GeneTree" id="ENSGT00940000158676"/>
<dbReference type="HOGENOM" id="CLU_000288_18_15_1"/>
<dbReference type="InParanoid" id="Q15404"/>
<dbReference type="OMA" id="RHMQGGR"/>
<dbReference type="OrthoDB" id="676979at2759"/>
<dbReference type="PAN-GO" id="Q15404">
    <property type="GO annotations" value="1 GO annotation based on evolutionary models"/>
</dbReference>
<dbReference type="PhylomeDB" id="Q15404"/>
<dbReference type="TreeFam" id="TF314790"/>
<dbReference type="PathwayCommons" id="Q15404"/>
<dbReference type="Reactome" id="R-HSA-446388">
    <property type="pathway name" value="Regulation of cytoskeletal remodeling and cell spreading by IPP complex components"/>
</dbReference>
<dbReference type="SignaLink" id="Q15404"/>
<dbReference type="BioGRID-ORCS" id="6251">
    <property type="hits" value="62 hits in 1150 CRISPR screens"/>
</dbReference>
<dbReference type="ChiTaRS" id="RSU1">
    <property type="organism name" value="human"/>
</dbReference>
<dbReference type="GeneWiki" id="RSU1"/>
<dbReference type="GenomeRNAi" id="6251"/>
<dbReference type="Pharos" id="Q15404">
    <property type="development level" value="Tbio"/>
</dbReference>
<dbReference type="PRO" id="PR:Q15404"/>
<dbReference type="Proteomes" id="UP000005640">
    <property type="component" value="Chromosome 10"/>
</dbReference>
<dbReference type="RNAct" id="Q15404">
    <property type="molecule type" value="protein"/>
</dbReference>
<dbReference type="Bgee" id="ENSG00000148484">
    <property type="expression patterns" value="Expressed in popliteal artery and 210 other cell types or tissues"/>
</dbReference>
<dbReference type="GO" id="GO:0005829">
    <property type="term" value="C:cytosol"/>
    <property type="evidence" value="ECO:0000304"/>
    <property type="project" value="Reactome"/>
</dbReference>
<dbReference type="GO" id="GO:0070062">
    <property type="term" value="C:extracellular exosome"/>
    <property type="evidence" value="ECO:0007005"/>
    <property type="project" value="UniProtKB"/>
</dbReference>
<dbReference type="GO" id="GO:0005925">
    <property type="term" value="C:focal adhesion"/>
    <property type="evidence" value="ECO:0000314"/>
    <property type="project" value="UniProtKB"/>
</dbReference>
<dbReference type="GO" id="GO:0035556">
    <property type="term" value="P:intracellular signal transduction"/>
    <property type="evidence" value="ECO:0000318"/>
    <property type="project" value="GO_Central"/>
</dbReference>
<dbReference type="GO" id="GO:0010811">
    <property type="term" value="P:positive regulation of cell-substrate adhesion"/>
    <property type="evidence" value="ECO:0000315"/>
    <property type="project" value="UniProtKB"/>
</dbReference>
<dbReference type="GO" id="GO:0043547">
    <property type="term" value="P:positive regulation of GTPase activity"/>
    <property type="evidence" value="ECO:0000315"/>
    <property type="project" value="UniProtKB"/>
</dbReference>
<dbReference type="GO" id="GO:0007165">
    <property type="term" value="P:signal transduction"/>
    <property type="evidence" value="ECO:0000304"/>
    <property type="project" value="ProtInc"/>
</dbReference>
<dbReference type="FunFam" id="3.80.10.10:FF:000034">
    <property type="entry name" value="Ras suppressor protein 1"/>
    <property type="match status" value="1"/>
</dbReference>
<dbReference type="FunFam" id="3.80.10.10:FF:000159">
    <property type="entry name" value="Ras suppressor protein 1"/>
    <property type="match status" value="1"/>
</dbReference>
<dbReference type="Gene3D" id="3.80.10.10">
    <property type="entry name" value="Ribonuclease Inhibitor"/>
    <property type="match status" value="2"/>
</dbReference>
<dbReference type="InterPro" id="IPR001611">
    <property type="entry name" value="Leu-rich_rpt"/>
</dbReference>
<dbReference type="InterPro" id="IPR003591">
    <property type="entry name" value="Leu-rich_rpt_typical-subtyp"/>
</dbReference>
<dbReference type="InterPro" id="IPR032675">
    <property type="entry name" value="LRR_dom_sf"/>
</dbReference>
<dbReference type="InterPro" id="IPR050216">
    <property type="entry name" value="LRR_domain-containing"/>
</dbReference>
<dbReference type="InterPro" id="IPR055414">
    <property type="entry name" value="LRR_R13L4/SHOC2-like"/>
</dbReference>
<dbReference type="PANTHER" id="PTHR48051">
    <property type="match status" value="1"/>
</dbReference>
<dbReference type="PANTHER" id="PTHR48051:SF1">
    <property type="entry name" value="RAS SUPPRESSOR PROTEIN 1"/>
    <property type="match status" value="1"/>
</dbReference>
<dbReference type="Pfam" id="PF23598">
    <property type="entry name" value="LRR_14"/>
    <property type="match status" value="1"/>
</dbReference>
<dbReference type="Pfam" id="PF13855">
    <property type="entry name" value="LRR_8"/>
    <property type="match status" value="1"/>
</dbReference>
<dbReference type="SMART" id="SM00364">
    <property type="entry name" value="LRR_BAC"/>
    <property type="match status" value="6"/>
</dbReference>
<dbReference type="SMART" id="SM00369">
    <property type="entry name" value="LRR_TYP"/>
    <property type="match status" value="7"/>
</dbReference>
<dbReference type="SUPFAM" id="SSF52058">
    <property type="entry name" value="L domain-like"/>
    <property type="match status" value="1"/>
</dbReference>
<dbReference type="PROSITE" id="PS51450">
    <property type="entry name" value="LRR"/>
    <property type="match status" value="7"/>
</dbReference>